<reference key="1">
    <citation type="journal article" date="2010" name="J. Bacteriol.">
        <title>Genome sequence of the Fleming strain of Micrococcus luteus, a simple free-living actinobacterium.</title>
        <authorList>
            <person name="Young M."/>
            <person name="Artsatbanov V."/>
            <person name="Beller H.R."/>
            <person name="Chandra G."/>
            <person name="Chater K.F."/>
            <person name="Dover L.G."/>
            <person name="Goh E.B."/>
            <person name="Kahan T."/>
            <person name="Kaprelyants A.S."/>
            <person name="Kyrpides N."/>
            <person name="Lapidus A."/>
            <person name="Lowry S.R."/>
            <person name="Lykidis A."/>
            <person name="Mahillon J."/>
            <person name="Markowitz V."/>
            <person name="Mavromatis K."/>
            <person name="Mukamolova G.V."/>
            <person name="Oren A."/>
            <person name="Rokem J.S."/>
            <person name="Smith M.C."/>
            <person name="Young D.I."/>
            <person name="Greenblatt C.L."/>
        </authorList>
    </citation>
    <scope>NUCLEOTIDE SEQUENCE [LARGE SCALE GENOMIC DNA]</scope>
    <source>
        <strain>ATCC 4698 / DSM 20030 / JCM 1464 / CCM 169 / CCUG 5858 / IAM 1056 / NBRC 3333 / NCIMB 9278 / NCTC 2665 / VKM Ac-2230</strain>
    </source>
</reference>
<evidence type="ECO:0000255" key="1">
    <source>
        <dbReference type="HAMAP-Rule" id="MF_01326"/>
    </source>
</evidence>
<evidence type="ECO:0000305" key="2"/>
<proteinExistence type="inferred from homology"/>
<organism>
    <name type="scientific">Micrococcus luteus (strain ATCC 4698 / DSM 20030 / JCM 1464 / CCM 169 / CCUG 5858 / IAM 1056 / NBRC 3333 / NCIMB 9278 / NCTC 2665 / VKM Ac-2230)</name>
    <name type="common">Micrococcus lysodeikticus</name>
    <dbReference type="NCBI Taxonomy" id="465515"/>
    <lineage>
        <taxon>Bacteria</taxon>
        <taxon>Bacillati</taxon>
        <taxon>Actinomycetota</taxon>
        <taxon>Actinomycetes</taxon>
        <taxon>Micrococcales</taxon>
        <taxon>Micrococcaceae</taxon>
        <taxon>Micrococcus</taxon>
    </lineage>
</organism>
<feature type="chain" id="PRO_1000214551" description="Large ribosomal subunit protein uL24">
    <location>
        <begin position="1"/>
        <end position="113"/>
    </location>
</feature>
<gene>
    <name evidence="1" type="primary">rplX</name>
    <name type="ordered locus">Mlut_17050</name>
</gene>
<keyword id="KW-1185">Reference proteome</keyword>
<keyword id="KW-0687">Ribonucleoprotein</keyword>
<keyword id="KW-0689">Ribosomal protein</keyword>
<keyword id="KW-0694">RNA-binding</keyword>
<keyword id="KW-0699">rRNA-binding</keyword>
<comment type="function">
    <text evidence="1">One of two assembly initiator proteins, it binds directly to the 5'-end of the 23S rRNA, where it nucleates assembly of the 50S subunit.</text>
</comment>
<comment type="function">
    <text evidence="1">One of the proteins that surrounds the polypeptide exit tunnel on the outside of the subunit.</text>
</comment>
<comment type="subunit">
    <text evidence="1">Part of the 50S ribosomal subunit.</text>
</comment>
<comment type="similarity">
    <text evidence="1">Belongs to the universal ribosomal protein uL24 family.</text>
</comment>
<accession>C5CC51</accession>
<dbReference type="EMBL" id="CP001628">
    <property type="protein sequence ID" value="ACS31192.1"/>
    <property type="molecule type" value="Genomic_DNA"/>
</dbReference>
<dbReference type="RefSeq" id="WP_002857489.1">
    <property type="nucleotide sequence ID" value="NZ_WBMF01000001.1"/>
</dbReference>
<dbReference type="SMR" id="C5CC51"/>
<dbReference type="STRING" id="465515.Mlut_17050"/>
<dbReference type="EnsemblBacteria" id="ACS31192">
    <property type="protein sequence ID" value="ACS31192"/>
    <property type="gene ID" value="Mlut_17050"/>
</dbReference>
<dbReference type="GeneID" id="93343572"/>
<dbReference type="KEGG" id="mlu:Mlut_17050"/>
<dbReference type="eggNOG" id="COG0198">
    <property type="taxonomic scope" value="Bacteria"/>
</dbReference>
<dbReference type="HOGENOM" id="CLU_093315_2_0_11"/>
<dbReference type="Proteomes" id="UP000000738">
    <property type="component" value="Chromosome"/>
</dbReference>
<dbReference type="GO" id="GO:1990904">
    <property type="term" value="C:ribonucleoprotein complex"/>
    <property type="evidence" value="ECO:0007669"/>
    <property type="project" value="UniProtKB-KW"/>
</dbReference>
<dbReference type="GO" id="GO:0005840">
    <property type="term" value="C:ribosome"/>
    <property type="evidence" value="ECO:0007669"/>
    <property type="project" value="UniProtKB-KW"/>
</dbReference>
<dbReference type="GO" id="GO:0019843">
    <property type="term" value="F:rRNA binding"/>
    <property type="evidence" value="ECO:0007669"/>
    <property type="project" value="UniProtKB-UniRule"/>
</dbReference>
<dbReference type="GO" id="GO:0003735">
    <property type="term" value="F:structural constituent of ribosome"/>
    <property type="evidence" value="ECO:0007669"/>
    <property type="project" value="InterPro"/>
</dbReference>
<dbReference type="GO" id="GO:0006412">
    <property type="term" value="P:translation"/>
    <property type="evidence" value="ECO:0007669"/>
    <property type="project" value="UniProtKB-UniRule"/>
</dbReference>
<dbReference type="CDD" id="cd06089">
    <property type="entry name" value="KOW_RPL26"/>
    <property type="match status" value="1"/>
</dbReference>
<dbReference type="Gene3D" id="2.30.30.30">
    <property type="match status" value="1"/>
</dbReference>
<dbReference type="HAMAP" id="MF_01326_B">
    <property type="entry name" value="Ribosomal_uL24_B"/>
    <property type="match status" value="1"/>
</dbReference>
<dbReference type="InterPro" id="IPR005824">
    <property type="entry name" value="KOW"/>
</dbReference>
<dbReference type="InterPro" id="IPR014722">
    <property type="entry name" value="Rib_uL2_dom2"/>
</dbReference>
<dbReference type="InterPro" id="IPR003256">
    <property type="entry name" value="Ribosomal_uL24"/>
</dbReference>
<dbReference type="InterPro" id="IPR005825">
    <property type="entry name" value="Ribosomal_uL24_CS"/>
</dbReference>
<dbReference type="InterPro" id="IPR041988">
    <property type="entry name" value="Ribosomal_uL24_KOW"/>
</dbReference>
<dbReference type="InterPro" id="IPR008991">
    <property type="entry name" value="Translation_prot_SH3-like_sf"/>
</dbReference>
<dbReference type="NCBIfam" id="TIGR01079">
    <property type="entry name" value="rplX_bact"/>
    <property type="match status" value="1"/>
</dbReference>
<dbReference type="PANTHER" id="PTHR12903">
    <property type="entry name" value="MITOCHONDRIAL RIBOSOMAL PROTEIN L24"/>
    <property type="match status" value="1"/>
</dbReference>
<dbReference type="Pfam" id="PF00467">
    <property type="entry name" value="KOW"/>
    <property type="match status" value="1"/>
</dbReference>
<dbReference type="Pfam" id="PF17136">
    <property type="entry name" value="ribosomal_L24"/>
    <property type="match status" value="1"/>
</dbReference>
<dbReference type="SMART" id="SM00739">
    <property type="entry name" value="KOW"/>
    <property type="match status" value="1"/>
</dbReference>
<dbReference type="SUPFAM" id="SSF50104">
    <property type="entry name" value="Translation proteins SH3-like domain"/>
    <property type="match status" value="1"/>
</dbReference>
<dbReference type="PROSITE" id="PS01108">
    <property type="entry name" value="RIBOSOMAL_L24"/>
    <property type="match status" value="1"/>
</dbReference>
<name>RL24_MICLC</name>
<sequence length="113" mass="12353">MAKIKKDDLVQVISGKDKGKQGKVLRVFPTDERVLVEGVNRVTKHLRAGQDNNGSTEGGLQVVEAPIHISNVAVVDPETKKPTRVGYRFETVEKDGVSKTVKVRFAKASGKEL</sequence>
<protein>
    <recommendedName>
        <fullName evidence="1">Large ribosomal subunit protein uL24</fullName>
    </recommendedName>
    <alternativeName>
        <fullName evidence="2">50S ribosomal protein L24</fullName>
    </alternativeName>
</protein>